<name>DXR_GLUOX</name>
<sequence length="408" mass="43244">MTDGSARPTRRRITVLGSTGSIGTSTVDLLARIPDEIEVRALVGGCNAALLAEQARRLNAEVAVIHDESRHEELKTCLAGTGIRTAAGRQAVIEAGAMEADWTMAAITGAAGLEPTLAAARNGHAVALANKEALVCAGDVMLRAVAEAGATLLPVDSEHNAIAQSLGGCDMESVEKIILTASGGPFRKSSIEEMRAATPEKALKHPTWTMGAKITIDSASMANKGLEVIEAARLFGLTEDRIDVLVHPQSVVHGLVQFRDGSLVSQMGSADMRIPIAHTLAWPKRMVTPCERLDLAAYGRLEFEAPDEVRFAPLRLARQVLRAGGAAPAVFSAANEVAVDAFLNRRIGFLGIGETIDAALQAMDENPELRTLDDVLHWDARGRALAEAHILRQSGGLRNDVSENALNA</sequence>
<keyword id="KW-0414">Isoprene biosynthesis</keyword>
<keyword id="KW-0464">Manganese</keyword>
<keyword id="KW-0479">Metal-binding</keyword>
<keyword id="KW-0521">NADP</keyword>
<keyword id="KW-0560">Oxidoreductase</keyword>
<keyword id="KW-1185">Reference proteome</keyword>
<reference key="1">
    <citation type="journal article" date="2005" name="Nat. Biotechnol.">
        <title>Complete genome sequence of the acetic acid bacterium Gluconobacter oxydans.</title>
        <authorList>
            <person name="Prust C."/>
            <person name="Hoffmeister M."/>
            <person name="Liesegang H."/>
            <person name="Wiezer A."/>
            <person name="Fricke W.F."/>
            <person name="Ehrenreich A."/>
            <person name="Gottschalk G."/>
            <person name="Deppenmeier U."/>
        </authorList>
    </citation>
    <scope>NUCLEOTIDE SEQUENCE [LARGE SCALE GENOMIC DNA]</scope>
    <source>
        <strain>621H</strain>
    </source>
</reference>
<accession>Q5FPZ1</accession>
<organism>
    <name type="scientific">Gluconobacter oxydans (strain 621H)</name>
    <name type="common">Gluconobacter suboxydans</name>
    <dbReference type="NCBI Taxonomy" id="290633"/>
    <lineage>
        <taxon>Bacteria</taxon>
        <taxon>Pseudomonadati</taxon>
        <taxon>Pseudomonadota</taxon>
        <taxon>Alphaproteobacteria</taxon>
        <taxon>Acetobacterales</taxon>
        <taxon>Acetobacteraceae</taxon>
        <taxon>Gluconobacter</taxon>
    </lineage>
</organism>
<dbReference type="EC" id="1.1.1.267" evidence="1"/>
<dbReference type="EMBL" id="CP000009">
    <property type="protein sequence ID" value="AAW61555.1"/>
    <property type="molecule type" value="Genomic_DNA"/>
</dbReference>
<dbReference type="RefSeq" id="WP_011253336.1">
    <property type="nucleotide sequence ID" value="NC_006677.1"/>
</dbReference>
<dbReference type="SMR" id="Q5FPZ1"/>
<dbReference type="STRING" id="290633.GOX1816"/>
<dbReference type="KEGG" id="gox:GOX1816"/>
<dbReference type="eggNOG" id="COG0743">
    <property type="taxonomic scope" value="Bacteria"/>
</dbReference>
<dbReference type="HOGENOM" id="CLU_035714_4_0_5"/>
<dbReference type="UniPathway" id="UPA00056">
    <property type="reaction ID" value="UER00092"/>
</dbReference>
<dbReference type="Proteomes" id="UP000006375">
    <property type="component" value="Chromosome"/>
</dbReference>
<dbReference type="GO" id="GO:0030604">
    <property type="term" value="F:1-deoxy-D-xylulose-5-phosphate reductoisomerase activity"/>
    <property type="evidence" value="ECO:0007669"/>
    <property type="project" value="UniProtKB-UniRule"/>
</dbReference>
<dbReference type="GO" id="GO:0030145">
    <property type="term" value="F:manganese ion binding"/>
    <property type="evidence" value="ECO:0007669"/>
    <property type="project" value="TreeGrafter"/>
</dbReference>
<dbReference type="GO" id="GO:0070402">
    <property type="term" value="F:NADPH binding"/>
    <property type="evidence" value="ECO:0007669"/>
    <property type="project" value="InterPro"/>
</dbReference>
<dbReference type="GO" id="GO:0051484">
    <property type="term" value="P:isopentenyl diphosphate biosynthetic process, methylerythritol 4-phosphate pathway involved in terpenoid biosynthetic process"/>
    <property type="evidence" value="ECO:0007669"/>
    <property type="project" value="TreeGrafter"/>
</dbReference>
<dbReference type="FunFam" id="3.40.50.720:FF:000045">
    <property type="entry name" value="1-deoxy-D-xylulose 5-phosphate reductoisomerase"/>
    <property type="match status" value="1"/>
</dbReference>
<dbReference type="Gene3D" id="1.10.1740.10">
    <property type="match status" value="1"/>
</dbReference>
<dbReference type="Gene3D" id="3.40.50.720">
    <property type="entry name" value="NAD(P)-binding Rossmann-like Domain"/>
    <property type="match status" value="1"/>
</dbReference>
<dbReference type="HAMAP" id="MF_00183">
    <property type="entry name" value="DXP_reductoisom"/>
    <property type="match status" value="1"/>
</dbReference>
<dbReference type="InterPro" id="IPR003821">
    <property type="entry name" value="DXP_reductoisomerase"/>
</dbReference>
<dbReference type="InterPro" id="IPR013644">
    <property type="entry name" value="DXP_reductoisomerase_C"/>
</dbReference>
<dbReference type="InterPro" id="IPR013512">
    <property type="entry name" value="DXP_reductoisomerase_N"/>
</dbReference>
<dbReference type="InterPro" id="IPR026877">
    <property type="entry name" value="DXPR_C"/>
</dbReference>
<dbReference type="InterPro" id="IPR036169">
    <property type="entry name" value="DXPR_C_sf"/>
</dbReference>
<dbReference type="InterPro" id="IPR036291">
    <property type="entry name" value="NAD(P)-bd_dom_sf"/>
</dbReference>
<dbReference type="NCBIfam" id="TIGR00243">
    <property type="entry name" value="Dxr"/>
    <property type="match status" value="1"/>
</dbReference>
<dbReference type="PANTHER" id="PTHR30525">
    <property type="entry name" value="1-DEOXY-D-XYLULOSE 5-PHOSPHATE REDUCTOISOMERASE"/>
    <property type="match status" value="1"/>
</dbReference>
<dbReference type="PANTHER" id="PTHR30525:SF0">
    <property type="entry name" value="1-DEOXY-D-XYLULOSE 5-PHOSPHATE REDUCTOISOMERASE, CHLOROPLASTIC"/>
    <property type="match status" value="1"/>
</dbReference>
<dbReference type="Pfam" id="PF08436">
    <property type="entry name" value="DXP_redisom_C"/>
    <property type="match status" value="1"/>
</dbReference>
<dbReference type="Pfam" id="PF02670">
    <property type="entry name" value="DXP_reductoisom"/>
    <property type="match status" value="1"/>
</dbReference>
<dbReference type="Pfam" id="PF13288">
    <property type="entry name" value="DXPR_C"/>
    <property type="match status" value="1"/>
</dbReference>
<dbReference type="PIRSF" id="PIRSF006205">
    <property type="entry name" value="Dxp_reductismrs"/>
    <property type="match status" value="1"/>
</dbReference>
<dbReference type="SUPFAM" id="SSF69055">
    <property type="entry name" value="1-deoxy-D-xylulose-5-phosphate reductoisomerase, C-terminal domain"/>
    <property type="match status" value="1"/>
</dbReference>
<dbReference type="SUPFAM" id="SSF55347">
    <property type="entry name" value="Glyceraldehyde-3-phosphate dehydrogenase-like, C-terminal domain"/>
    <property type="match status" value="1"/>
</dbReference>
<dbReference type="SUPFAM" id="SSF51735">
    <property type="entry name" value="NAD(P)-binding Rossmann-fold domains"/>
    <property type="match status" value="1"/>
</dbReference>
<evidence type="ECO:0000255" key="1">
    <source>
        <dbReference type="HAMAP-Rule" id="MF_00183"/>
    </source>
</evidence>
<feature type="chain" id="PRO_0000163658" description="1-deoxy-D-xylulose 5-phosphate reductoisomerase">
    <location>
        <begin position="1"/>
        <end position="408"/>
    </location>
</feature>
<feature type="binding site" evidence="1">
    <location>
        <position position="19"/>
    </location>
    <ligand>
        <name>NADPH</name>
        <dbReference type="ChEBI" id="CHEBI:57783"/>
    </ligand>
</feature>
<feature type="binding site" evidence="1">
    <location>
        <position position="20"/>
    </location>
    <ligand>
        <name>NADPH</name>
        <dbReference type="ChEBI" id="CHEBI:57783"/>
    </ligand>
</feature>
<feature type="binding site" evidence="1">
    <location>
        <position position="21"/>
    </location>
    <ligand>
        <name>NADPH</name>
        <dbReference type="ChEBI" id="CHEBI:57783"/>
    </ligand>
</feature>
<feature type="binding site" evidence="1">
    <location>
        <position position="22"/>
    </location>
    <ligand>
        <name>NADPH</name>
        <dbReference type="ChEBI" id="CHEBI:57783"/>
    </ligand>
</feature>
<feature type="binding site" evidence="1">
    <location>
        <position position="45"/>
    </location>
    <ligand>
        <name>NADPH</name>
        <dbReference type="ChEBI" id="CHEBI:57783"/>
    </ligand>
</feature>
<feature type="binding site" evidence="1">
    <location>
        <position position="47"/>
    </location>
    <ligand>
        <name>NADPH</name>
        <dbReference type="ChEBI" id="CHEBI:57783"/>
    </ligand>
</feature>
<feature type="binding site" evidence="1">
    <location>
        <position position="130"/>
    </location>
    <ligand>
        <name>NADPH</name>
        <dbReference type="ChEBI" id="CHEBI:57783"/>
    </ligand>
</feature>
<feature type="binding site" evidence="1">
    <location>
        <position position="131"/>
    </location>
    <ligand>
        <name>1-deoxy-D-xylulose 5-phosphate</name>
        <dbReference type="ChEBI" id="CHEBI:57792"/>
    </ligand>
</feature>
<feature type="binding site" evidence="1">
    <location>
        <position position="132"/>
    </location>
    <ligand>
        <name>NADPH</name>
        <dbReference type="ChEBI" id="CHEBI:57783"/>
    </ligand>
</feature>
<feature type="binding site" evidence="1">
    <location>
        <position position="156"/>
    </location>
    <ligand>
        <name>Mn(2+)</name>
        <dbReference type="ChEBI" id="CHEBI:29035"/>
    </ligand>
</feature>
<feature type="binding site" evidence="1">
    <location>
        <position position="157"/>
    </location>
    <ligand>
        <name>1-deoxy-D-xylulose 5-phosphate</name>
        <dbReference type="ChEBI" id="CHEBI:57792"/>
    </ligand>
</feature>
<feature type="binding site" evidence="1">
    <location>
        <position position="158"/>
    </location>
    <ligand>
        <name>1-deoxy-D-xylulose 5-phosphate</name>
        <dbReference type="ChEBI" id="CHEBI:57792"/>
    </ligand>
</feature>
<feature type="binding site" evidence="1">
    <location>
        <position position="158"/>
    </location>
    <ligand>
        <name>Mn(2+)</name>
        <dbReference type="ChEBI" id="CHEBI:29035"/>
    </ligand>
</feature>
<feature type="binding site" evidence="1">
    <location>
        <position position="182"/>
    </location>
    <ligand>
        <name>1-deoxy-D-xylulose 5-phosphate</name>
        <dbReference type="ChEBI" id="CHEBI:57792"/>
    </ligand>
</feature>
<feature type="binding site" evidence="1">
    <location>
        <position position="205"/>
    </location>
    <ligand>
        <name>1-deoxy-D-xylulose 5-phosphate</name>
        <dbReference type="ChEBI" id="CHEBI:57792"/>
    </ligand>
</feature>
<feature type="binding site" evidence="1">
    <location>
        <position position="211"/>
    </location>
    <ligand>
        <name>NADPH</name>
        <dbReference type="ChEBI" id="CHEBI:57783"/>
    </ligand>
</feature>
<feature type="binding site" evidence="1">
    <location>
        <position position="218"/>
    </location>
    <ligand>
        <name>1-deoxy-D-xylulose 5-phosphate</name>
        <dbReference type="ChEBI" id="CHEBI:57792"/>
    </ligand>
</feature>
<feature type="binding site" evidence="1">
    <location>
        <position position="223"/>
    </location>
    <ligand>
        <name>1-deoxy-D-xylulose 5-phosphate</name>
        <dbReference type="ChEBI" id="CHEBI:57792"/>
    </ligand>
</feature>
<feature type="binding site" evidence="1">
    <location>
        <position position="224"/>
    </location>
    <ligand>
        <name>1-deoxy-D-xylulose 5-phosphate</name>
        <dbReference type="ChEBI" id="CHEBI:57792"/>
    </ligand>
</feature>
<feature type="binding site" evidence="1">
    <location>
        <position position="227"/>
    </location>
    <ligand>
        <name>1-deoxy-D-xylulose 5-phosphate</name>
        <dbReference type="ChEBI" id="CHEBI:57792"/>
    </ligand>
</feature>
<feature type="binding site" evidence="1">
    <location>
        <position position="227"/>
    </location>
    <ligand>
        <name>Mn(2+)</name>
        <dbReference type="ChEBI" id="CHEBI:29035"/>
    </ligand>
</feature>
<proteinExistence type="inferred from homology"/>
<gene>
    <name evidence="1" type="primary">dxr</name>
    <name type="ordered locus">GOX1816</name>
</gene>
<protein>
    <recommendedName>
        <fullName evidence="1">1-deoxy-D-xylulose 5-phosphate reductoisomerase</fullName>
        <shortName evidence="1">DXP reductoisomerase</shortName>
        <ecNumber evidence="1">1.1.1.267</ecNumber>
    </recommendedName>
    <alternativeName>
        <fullName evidence="1">1-deoxyxylulose-5-phosphate reductoisomerase</fullName>
    </alternativeName>
    <alternativeName>
        <fullName evidence="1">2-C-methyl-D-erythritol 4-phosphate synthase</fullName>
    </alternativeName>
</protein>
<comment type="function">
    <text evidence="1">Catalyzes the NADPH-dependent rearrangement and reduction of 1-deoxy-D-xylulose-5-phosphate (DXP) to 2-C-methyl-D-erythritol 4-phosphate (MEP).</text>
</comment>
<comment type="catalytic activity">
    <reaction evidence="1">
        <text>2-C-methyl-D-erythritol 4-phosphate + NADP(+) = 1-deoxy-D-xylulose 5-phosphate + NADPH + H(+)</text>
        <dbReference type="Rhea" id="RHEA:13717"/>
        <dbReference type="ChEBI" id="CHEBI:15378"/>
        <dbReference type="ChEBI" id="CHEBI:57783"/>
        <dbReference type="ChEBI" id="CHEBI:57792"/>
        <dbReference type="ChEBI" id="CHEBI:58262"/>
        <dbReference type="ChEBI" id="CHEBI:58349"/>
        <dbReference type="EC" id="1.1.1.267"/>
    </reaction>
    <physiologicalReaction direction="right-to-left" evidence="1">
        <dbReference type="Rhea" id="RHEA:13719"/>
    </physiologicalReaction>
</comment>
<comment type="cofactor">
    <cofactor evidence="1">
        <name>Mg(2+)</name>
        <dbReference type="ChEBI" id="CHEBI:18420"/>
    </cofactor>
    <cofactor evidence="1">
        <name>Mn(2+)</name>
        <dbReference type="ChEBI" id="CHEBI:29035"/>
    </cofactor>
</comment>
<comment type="pathway">
    <text evidence="1">Isoprenoid biosynthesis; isopentenyl diphosphate biosynthesis via DXP pathway; isopentenyl diphosphate from 1-deoxy-D-xylulose 5-phosphate: step 1/6.</text>
</comment>
<comment type="similarity">
    <text evidence="1">Belongs to the DXR family.</text>
</comment>